<feature type="chain" id="PRO_0000183218" description="UDP-glucose 4-epimerase">
    <location>
        <begin position="1"/>
        <end position="338"/>
    </location>
</feature>
<feature type="active site" description="Proton acceptor" evidence="1">
    <location>
        <position position="149"/>
    </location>
</feature>
<feature type="binding site" evidence="1">
    <location>
        <begin position="11"/>
        <end position="12"/>
    </location>
    <ligand>
        <name>NAD(+)</name>
        <dbReference type="ChEBI" id="CHEBI:57540"/>
    </ligand>
</feature>
<feature type="binding site" evidence="1">
    <location>
        <begin position="31"/>
        <end position="36"/>
    </location>
    <ligand>
        <name>NAD(+)</name>
        <dbReference type="ChEBI" id="CHEBI:57540"/>
    </ligand>
</feature>
<feature type="binding site" evidence="1">
    <location>
        <begin position="58"/>
        <end position="59"/>
    </location>
    <ligand>
        <name>NAD(+)</name>
        <dbReference type="ChEBI" id="CHEBI:57540"/>
    </ligand>
</feature>
<feature type="binding site" evidence="1">
    <location>
        <begin position="80"/>
        <end position="84"/>
    </location>
    <ligand>
        <name>NAD(+)</name>
        <dbReference type="ChEBI" id="CHEBI:57540"/>
    </ligand>
</feature>
<feature type="binding site" evidence="1">
    <location>
        <position position="99"/>
    </location>
    <ligand>
        <name>NAD(+)</name>
        <dbReference type="ChEBI" id="CHEBI:57540"/>
    </ligand>
</feature>
<feature type="binding site" evidence="1">
    <location>
        <position position="124"/>
    </location>
    <ligand>
        <name>NAD(+)</name>
        <dbReference type="ChEBI" id="CHEBI:57540"/>
    </ligand>
</feature>
<feature type="binding site" evidence="1">
    <location>
        <position position="124"/>
    </location>
    <ligand>
        <name>substrate</name>
    </ligand>
</feature>
<feature type="binding site" evidence="1">
    <location>
        <position position="149"/>
    </location>
    <ligand>
        <name>NAD(+)</name>
        <dbReference type="ChEBI" id="CHEBI:57540"/>
    </ligand>
</feature>
<feature type="binding site" evidence="1">
    <location>
        <position position="149"/>
    </location>
    <ligand>
        <name>substrate</name>
    </ligand>
</feature>
<feature type="binding site" evidence="1">
    <location>
        <position position="153"/>
    </location>
    <ligand>
        <name>NAD(+)</name>
        <dbReference type="ChEBI" id="CHEBI:57540"/>
    </ligand>
</feature>
<feature type="binding site" evidence="1">
    <location>
        <position position="178"/>
    </location>
    <ligand>
        <name>NAD(+)</name>
        <dbReference type="ChEBI" id="CHEBI:57540"/>
    </ligand>
</feature>
<feature type="binding site" evidence="1">
    <location>
        <position position="179"/>
    </location>
    <ligand>
        <name>substrate</name>
    </ligand>
</feature>
<feature type="binding site" evidence="1">
    <location>
        <begin position="199"/>
        <end position="200"/>
    </location>
    <ligand>
        <name>substrate</name>
    </ligand>
</feature>
<feature type="binding site" evidence="1">
    <location>
        <begin position="216"/>
        <end position="218"/>
    </location>
    <ligand>
        <name>substrate</name>
    </ligand>
</feature>
<feature type="binding site" evidence="1">
    <location>
        <position position="231"/>
    </location>
    <ligand>
        <name>substrate</name>
    </ligand>
</feature>
<feature type="binding site" evidence="1">
    <location>
        <begin position="292"/>
        <end position="295"/>
    </location>
    <ligand>
        <name>substrate</name>
    </ligand>
</feature>
<feature type="binding site" evidence="1">
    <location>
        <position position="299"/>
    </location>
    <ligand>
        <name>substrate</name>
    </ligand>
</feature>
<feature type="sequence conflict" description="In Ref. 1; AAA27111." evidence="2" ref="1">
    <original>E</original>
    <variation>N</variation>
    <location>
        <position position="88"/>
    </location>
</feature>
<feature type="sequence conflict" description="In Ref. 1; AAA27111." evidence="2" ref="1">
    <original>T</original>
    <variation>A</variation>
    <location>
        <position position="144"/>
    </location>
</feature>
<feature type="sequence conflict" description="In Ref. 1; AAA27111." evidence="2" ref="1">
    <original>Y</original>
    <variation>T</variation>
    <location>
        <position position="149"/>
    </location>
</feature>
<feature type="sequence conflict" description="In Ref. 1; AAA27111." evidence="2" ref="1">
    <location>
        <position position="292"/>
    </location>
</feature>
<feature type="sequence conflict" description="In Ref. 1; AAA27111." evidence="2" ref="1">
    <original>G</original>
    <variation>A</variation>
    <location>
        <position position="335"/>
    </location>
</feature>
<dbReference type="EC" id="5.1.3.2"/>
<dbReference type="EMBL" id="M33681">
    <property type="protein sequence ID" value="AAA27111.1"/>
    <property type="molecule type" value="Genomic_DNA"/>
</dbReference>
<dbReference type="EMBL" id="AE006468">
    <property type="protein sequence ID" value="AAL19714.1"/>
    <property type="molecule type" value="Genomic_DNA"/>
</dbReference>
<dbReference type="PIR" id="A37760">
    <property type="entry name" value="A37760"/>
</dbReference>
<dbReference type="RefSeq" id="NP_459755.1">
    <property type="nucleotide sequence ID" value="NC_003197.2"/>
</dbReference>
<dbReference type="RefSeq" id="WP_001265465.1">
    <property type="nucleotide sequence ID" value="NC_003197.2"/>
</dbReference>
<dbReference type="SMR" id="P22715"/>
<dbReference type="STRING" id="99287.STM0776"/>
<dbReference type="PaxDb" id="99287-STM0776"/>
<dbReference type="GeneID" id="1252296"/>
<dbReference type="KEGG" id="stm:STM0776"/>
<dbReference type="PATRIC" id="fig|99287.12.peg.809"/>
<dbReference type="HOGENOM" id="CLU_007383_1_10_6"/>
<dbReference type="OMA" id="GEHLICN"/>
<dbReference type="PhylomeDB" id="P22715"/>
<dbReference type="BioCyc" id="SENT99287:STM0776-MONOMER"/>
<dbReference type="UniPathway" id="UPA00214"/>
<dbReference type="Proteomes" id="UP000001014">
    <property type="component" value="Chromosome"/>
</dbReference>
<dbReference type="GO" id="GO:0005829">
    <property type="term" value="C:cytosol"/>
    <property type="evidence" value="ECO:0000318"/>
    <property type="project" value="GO_Central"/>
</dbReference>
<dbReference type="GO" id="GO:0003978">
    <property type="term" value="F:UDP-glucose 4-epimerase activity"/>
    <property type="evidence" value="ECO:0000318"/>
    <property type="project" value="GO_Central"/>
</dbReference>
<dbReference type="GO" id="GO:0006012">
    <property type="term" value="P:galactose metabolic process"/>
    <property type="evidence" value="ECO:0007669"/>
    <property type="project" value="UniProtKB-UniPathway"/>
</dbReference>
<dbReference type="GO" id="GO:0005996">
    <property type="term" value="P:monosaccharide metabolic process"/>
    <property type="evidence" value="ECO:0000318"/>
    <property type="project" value="GO_Central"/>
</dbReference>
<dbReference type="CDD" id="cd05247">
    <property type="entry name" value="UDP_G4E_1_SDR_e"/>
    <property type="match status" value="1"/>
</dbReference>
<dbReference type="FunFam" id="3.40.50.720:FF:000040">
    <property type="entry name" value="UDP-glucose 4-epimerase"/>
    <property type="match status" value="1"/>
</dbReference>
<dbReference type="Gene3D" id="3.40.50.720">
    <property type="entry name" value="NAD(P)-binding Rossmann-like Domain"/>
    <property type="match status" value="1"/>
</dbReference>
<dbReference type="Gene3D" id="3.90.25.10">
    <property type="entry name" value="UDP-galactose 4-epimerase, domain 1"/>
    <property type="match status" value="1"/>
</dbReference>
<dbReference type="InterPro" id="IPR001509">
    <property type="entry name" value="Epimerase_deHydtase"/>
</dbReference>
<dbReference type="InterPro" id="IPR036291">
    <property type="entry name" value="NAD(P)-bd_dom_sf"/>
</dbReference>
<dbReference type="InterPro" id="IPR005886">
    <property type="entry name" value="UDP_G4E"/>
</dbReference>
<dbReference type="NCBIfam" id="TIGR01179">
    <property type="entry name" value="galE"/>
    <property type="match status" value="1"/>
</dbReference>
<dbReference type="NCBIfam" id="NF007956">
    <property type="entry name" value="PRK10675.1"/>
    <property type="match status" value="1"/>
</dbReference>
<dbReference type="PANTHER" id="PTHR43725">
    <property type="entry name" value="UDP-GLUCOSE 4-EPIMERASE"/>
    <property type="match status" value="1"/>
</dbReference>
<dbReference type="PANTHER" id="PTHR43725:SF47">
    <property type="entry name" value="UDP-GLUCOSE 4-EPIMERASE"/>
    <property type="match status" value="1"/>
</dbReference>
<dbReference type="Pfam" id="PF01370">
    <property type="entry name" value="Epimerase"/>
    <property type="match status" value="1"/>
</dbReference>
<dbReference type="SUPFAM" id="SSF51735">
    <property type="entry name" value="NAD(P)-binding Rossmann-fold domains"/>
    <property type="match status" value="1"/>
</dbReference>
<protein>
    <recommendedName>
        <fullName>UDP-glucose 4-epimerase</fullName>
        <ecNumber>5.1.3.2</ecNumber>
    </recommendedName>
    <alternativeName>
        <fullName>Galactowaldenase</fullName>
    </alternativeName>
    <alternativeName>
        <fullName>UDP-galactose 4-epimerase</fullName>
    </alternativeName>
</protein>
<name>GALE_SALTY</name>
<gene>
    <name type="primary">galE</name>
    <name type="ordered locus">STM0776</name>
</gene>
<keyword id="KW-0119">Carbohydrate metabolism</keyword>
<keyword id="KW-0299">Galactose metabolism</keyword>
<keyword id="KW-0413">Isomerase</keyword>
<keyword id="KW-0520">NAD</keyword>
<keyword id="KW-1185">Reference proteome</keyword>
<reference key="1">
    <citation type="journal article" date="1990" name="J. Bacteriol.">
        <title>Molecular cloning and physical and functional characterization of the Salmonella typhimurium and Salmonella typhi galactose utilization operons.</title>
        <authorList>
            <person name="Houng H.S.H."/>
            <person name="Kopecko D.J."/>
            <person name="Baron L.S."/>
        </authorList>
    </citation>
    <scope>NUCLEOTIDE SEQUENCE [GENOMIC DNA]</scope>
</reference>
<reference key="2">
    <citation type="journal article" date="2001" name="Nature">
        <title>Complete genome sequence of Salmonella enterica serovar Typhimurium LT2.</title>
        <authorList>
            <person name="McClelland M."/>
            <person name="Sanderson K.E."/>
            <person name="Spieth J."/>
            <person name="Clifton S.W."/>
            <person name="Latreille P."/>
            <person name="Courtney L."/>
            <person name="Porwollik S."/>
            <person name="Ali J."/>
            <person name="Dante M."/>
            <person name="Du F."/>
            <person name="Hou S."/>
            <person name="Layman D."/>
            <person name="Leonard S."/>
            <person name="Nguyen C."/>
            <person name="Scott K."/>
            <person name="Holmes A."/>
            <person name="Grewal N."/>
            <person name="Mulvaney E."/>
            <person name="Ryan E."/>
            <person name="Sun H."/>
            <person name="Florea L."/>
            <person name="Miller W."/>
            <person name="Stoneking T."/>
            <person name="Nhan M."/>
            <person name="Waterston R."/>
            <person name="Wilson R.K."/>
        </authorList>
    </citation>
    <scope>NUCLEOTIDE SEQUENCE [LARGE SCALE GENOMIC DNA]</scope>
    <source>
        <strain>LT2 / SGSC1412 / ATCC 700720</strain>
    </source>
</reference>
<proteinExistence type="inferred from homology"/>
<comment type="function">
    <text evidence="1">Involved in the metabolism of galactose. Catalyzes the conversion of UDP-galactose (UDP-Gal) to UDP-glucose (UDP-Glc) through a mechanism involving the transient reduction of NAD (By similarity).</text>
</comment>
<comment type="catalytic activity">
    <reaction>
        <text>UDP-alpha-D-glucose = UDP-alpha-D-galactose</text>
        <dbReference type="Rhea" id="RHEA:22168"/>
        <dbReference type="ChEBI" id="CHEBI:58885"/>
        <dbReference type="ChEBI" id="CHEBI:66914"/>
        <dbReference type="EC" id="5.1.3.2"/>
    </reaction>
</comment>
<comment type="cofactor">
    <cofactor evidence="1">
        <name>NAD(+)</name>
        <dbReference type="ChEBI" id="CHEBI:57540"/>
    </cofactor>
</comment>
<comment type="pathway">
    <text>Carbohydrate metabolism; galactose metabolism.</text>
</comment>
<comment type="subunit">
    <text evidence="1">Homodimer.</text>
</comment>
<comment type="similarity">
    <text evidence="2">Belongs to the NAD(P)-dependent epimerase/dehydratase family.</text>
</comment>
<organism>
    <name type="scientific">Salmonella typhimurium (strain LT2 / SGSC1412 / ATCC 700720)</name>
    <dbReference type="NCBI Taxonomy" id="99287"/>
    <lineage>
        <taxon>Bacteria</taxon>
        <taxon>Pseudomonadati</taxon>
        <taxon>Pseudomonadota</taxon>
        <taxon>Gammaproteobacteria</taxon>
        <taxon>Enterobacterales</taxon>
        <taxon>Enterobacteriaceae</taxon>
        <taxon>Salmonella</taxon>
    </lineage>
</organism>
<accession>P22715</accession>
<sequence length="338" mass="37134">MRVLVTGGSGYIGSHTCVQLLQNGHDVVILDNLCNSKRSVLPVIERLGGKHPTFVEGDIRNEALITEILHDHAIDTVIHFAGLKAVGESVARPLEYYDNNVNGTLRLVSAMRAANVKNLIFSSSATVYGDQPKIPYVESFPTGTPQSPYGKSKLMVEQILTDLQKAQPEWSIALLRYFNPVGAHPSGDMGEDPQGIPNNLMPYIAQVAVGRRESLAVFGNDYPTEDGTGVRDYIHVMDLADGHVVAMEKLADKSGVHIYNLGAGVGSSVLDVVNAFSKACGKPINYHFAPRRDGDLPAYWADASKADRELNWRVTRTLDEMAQDTWHWQSRHPQGYPD</sequence>
<evidence type="ECO:0000250" key="1"/>
<evidence type="ECO:0000305" key="2"/>